<gene>
    <name type="primary">rpl10a</name>
    <name type="ORF">zgc:73082</name>
</gene>
<organism>
    <name type="scientific">Danio rerio</name>
    <name type="common">Zebrafish</name>
    <name type="synonym">Brachydanio rerio</name>
    <dbReference type="NCBI Taxonomy" id="7955"/>
    <lineage>
        <taxon>Eukaryota</taxon>
        <taxon>Metazoa</taxon>
        <taxon>Chordata</taxon>
        <taxon>Craniata</taxon>
        <taxon>Vertebrata</taxon>
        <taxon>Euteleostomi</taxon>
        <taxon>Actinopterygii</taxon>
        <taxon>Neopterygii</taxon>
        <taxon>Teleostei</taxon>
        <taxon>Ostariophysi</taxon>
        <taxon>Cypriniformes</taxon>
        <taxon>Danionidae</taxon>
        <taxon>Danioninae</taxon>
        <taxon>Danio</taxon>
    </lineage>
</organism>
<keyword id="KW-0963">Cytoplasm</keyword>
<keyword id="KW-1185">Reference proteome</keyword>
<keyword id="KW-0687">Ribonucleoprotein</keyword>
<keyword id="KW-0689">Ribosomal protein</keyword>
<accession>Q6PC69</accession>
<accession>Q6IQA0</accession>
<sequence>MSKVSRDTLYEAVKEVQAGSRRKKRKFLETVELQISLKNYDPQKDKRFSGTVRLKTTPRPKFSVCVLGDQQHCDEAKAAELPHMDIEALKKLNKNKKLVKKLAKKYDAFLASESLIKQIPRILGPGLNKAGKFPSLLTHNENLGTKVDEVKSTIKFQMKKVLCLAVAVGHVKMSEEELVYNIHLAVNFLVSLLKKNWQNVRALYIKSTMGKPQRLY</sequence>
<protein>
    <recommendedName>
        <fullName evidence="2">Large ribosomal subunit protein uL1</fullName>
    </recommendedName>
    <alternativeName>
        <fullName>60S ribosomal protein L10a</fullName>
    </alternativeName>
</protein>
<evidence type="ECO:0000250" key="1">
    <source>
        <dbReference type="UniProtKB" id="P62906"/>
    </source>
</evidence>
<evidence type="ECO:0000305" key="2"/>
<proteinExistence type="evidence at transcript level"/>
<feature type="chain" id="PRO_0000125824" description="Large ribosomal subunit protein uL1">
    <location>
        <begin position="1"/>
        <end position="216"/>
    </location>
</feature>
<feature type="sequence conflict" description="In Ref. 1; AAH71510." evidence="2" ref="1">
    <original>K</original>
    <variation>Q</variation>
    <location>
        <position position="61"/>
    </location>
</feature>
<comment type="function">
    <text evidence="1">Component of the large ribosomal subunit. The ribosome is a large ribonucleoprotein complex responsible for the synthesis of proteins in the cell.</text>
</comment>
<comment type="subunit">
    <text evidence="1">Component of the large ribosomal subunit.</text>
</comment>
<comment type="subcellular location">
    <subcellularLocation>
        <location evidence="1">Cytoplasm</location>
    </subcellularLocation>
</comment>
<comment type="similarity">
    <text evidence="2">Belongs to the universal ribosomal protein uL1 family.</text>
</comment>
<reference key="1">
    <citation type="submission" date="2004-06" db="EMBL/GenBank/DDBJ databases">
        <authorList>
            <consortium name="NIH - Zebrafish Gene Collection (ZGC) project"/>
        </authorList>
    </citation>
    <scope>NUCLEOTIDE SEQUENCE [LARGE SCALE MRNA]</scope>
    <source>
        <tissue>Eye</tissue>
    </source>
</reference>
<name>RL10A_DANRE</name>
<dbReference type="EMBL" id="BC059454">
    <property type="protein sequence ID" value="AAH59454.1"/>
    <property type="molecule type" value="mRNA"/>
</dbReference>
<dbReference type="EMBL" id="BC071510">
    <property type="protein sequence ID" value="AAH71510.1"/>
    <property type="molecule type" value="mRNA"/>
</dbReference>
<dbReference type="RefSeq" id="NP_955930.1">
    <property type="nucleotide sequence ID" value="NM_199636.1"/>
</dbReference>
<dbReference type="SMR" id="Q6PC69"/>
<dbReference type="FunCoup" id="Q6PC69">
    <property type="interactions" value="2493"/>
</dbReference>
<dbReference type="STRING" id="7955.ENSDARP00000062982"/>
<dbReference type="PaxDb" id="7955-ENSDARP00000062982"/>
<dbReference type="Ensembl" id="ENSDART00000062983">
    <property type="protein sequence ID" value="ENSDARP00000062982"/>
    <property type="gene ID" value="ENSDARG00000042905"/>
</dbReference>
<dbReference type="GeneID" id="323305"/>
<dbReference type="KEGG" id="dre:323305"/>
<dbReference type="AGR" id="ZFIN:ZDB-GENE-030131-2025"/>
<dbReference type="CTD" id="4736"/>
<dbReference type="ZFIN" id="ZDB-GENE-030131-2025">
    <property type="gene designation" value="rpl10a"/>
</dbReference>
<dbReference type="eggNOG" id="KOG1570">
    <property type="taxonomic scope" value="Eukaryota"/>
</dbReference>
<dbReference type="HOGENOM" id="CLU_062853_3_0_1"/>
<dbReference type="InParanoid" id="Q6PC69"/>
<dbReference type="OMA" id="CTHNEAL"/>
<dbReference type="OrthoDB" id="2449818at2759"/>
<dbReference type="PhylomeDB" id="Q6PC69"/>
<dbReference type="TreeFam" id="TF300791"/>
<dbReference type="Reactome" id="R-DRE-156827">
    <property type="pathway name" value="L13a-mediated translational silencing of Ceruloplasmin expression"/>
</dbReference>
<dbReference type="Reactome" id="R-DRE-1799339">
    <property type="pathway name" value="SRP-dependent cotranslational protein targeting to membrane"/>
</dbReference>
<dbReference type="Reactome" id="R-DRE-72689">
    <property type="pathway name" value="Formation of a pool of free 40S subunits"/>
</dbReference>
<dbReference type="Reactome" id="R-DRE-975956">
    <property type="pathway name" value="Nonsense Mediated Decay (NMD) independent of the Exon Junction Complex (EJC)"/>
</dbReference>
<dbReference type="Reactome" id="R-DRE-975957">
    <property type="pathway name" value="Nonsense Mediated Decay (NMD) enhanced by the Exon Junction Complex (EJC)"/>
</dbReference>
<dbReference type="PRO" id="PR:Q6PC69"/>
<dbReference type="Proteomes" id="UP000000437">
    <property type="component" value="Alternate scaffold 8"/>
</dbReference>
<dbReference type="Proteomes" id="UP000000437">
    <property type="component" value="Chromosome 8"/>
</dbReference>
<dbReference type="Bgee" id="ENSDARG00000042905">
    <property type="expression patterns" value="Expressed in pharyngeal gill and 23 other cell types or tissues"/>
</dbReference>
<dbReference type="ExpressionAtlas" id="Q6PC69">
    <property type="expression patterns" value="baseline and differential"/>
</dbReference>
<dbReference type="GO" id="GO:0022625">
    <property type="term" value="C:cytosolic large ribosomal subunit"/>
    <property type="evidence" value="ECO:0000318"/>
    <property type="project" value="GO_Central"/>
</dbReference>
<dbReference type="GO" id="GO:0003723">
    <property type="term" value="F:RNA binding"/>
    <property type="evidence" value="ECO:0000318"/>
    <property type="project" value="GO_Central"/>
</dbReference>
<dbReference type="GO" id="GO:0003735">
    <property type="term" value="F:structural constituent of ribosome"/>
    <property type="evidence" value="ECO:0007669"/>
    <property type="project" value="InterPro"/>
</dbReference>
<dbReference type="GO" id="GO:0043009">
    <property type="term" value="P:chordate embryonic development"/>
    <property type="evidence" value="ECO:0000315"/>
    <property type="project" value="ZFIN"/>
</dbReference>
<dbReference type="GO" id="GO:0042541">
    <property type="term" value="P:hemoglobin biosynthetic process"/>
    <property type="evidence" value="ECO:0000315"/>
    <property type="project" value="ZFIN"/>
</dbReference>
<dbReference type="GO" id="GO:0033077">
    <property type="term" value="P:T cell differentiation in thymus"/>
    <property type="evidence" value="ECO:0000315"/>
    <property type="project" value="ZFIN"/>
</dbReference>
<dbReference type="GO" id="GO:0006412">
    <property type="term" value="P:translation"/>
    <property type="evidence" value="ECO:0007669"/>
    <property type="project" value="InterPro"/>
</dbReference>
<dbReference type="CDD" id="cd00403">
    <property type="entry name" value="Ribosomal_L1"/>
    <property type="match status" value="1"/>
</dbReference>
<dbReference type="FunFam" id="3.30.190.20:FF:000006">
    <property type="entry name" value="Ribosomal protein"/>
    <property type="match status" value="1"/>
</dbReference>
<dbReference type="FunFam" id="3.40.50.790:FF:000002">
    <property type="entry name" value="Ribosomal protein"/>
    <property type="match status" value="1"/>
</dbReference>
<dbReference type="FunFam" id="3.30.190.20:FF:000009">
    <property type="entry name" value="Ribosomal protein L10a"/>
    <property type="match status" value="1"/>
</dbReference>
<dbReference type="Gene3D" id="3.30.190.20">
    <property type="match status" value="1"/>
</dbReference>
<dbReference type="Gene3D" id="3.40.50.790">
    <property type="match status" value="1"/>
</dbReference>
<dbReference type="InterPro" id="IPR050257">
    <property type="entry name" value="eL8/uL1-like"/>
</dbReference>
<dbReference type="InterPro" id="IPR002143">
    <property type="entry name" value="Ribosomal_uL1"/>
</dbReference>
<dbReference type="InterPro" id="IPR023674">
    <property type="entry name" value="Ribosomal_uL1-like"/>
</dbReference>
<dbReference type="InterPro" id="IPR028364">
    <property type="entry name" value="Ribosomal_uL1/biogenesis"/>
</dbReference>
<dbReference type="InterPro" id="IPR016095">
    <property type="entry name" value="Ribosomal_uL1_3-a/b-sand"/>
</dbReference>
<dbReference type="InterPro" id="IPR023673">
    <property type="entry name" value="Ribosomal_uL1_CS"/>
</dbReference>
<dbReference type="PANTHER" id="PTHR23105">
    <property type="entry name" value="RIBOSOMAL PROTEIN L7AE FAMILY MEMBER"/>
    <property type="match status" value="1"/>
</dbReference>
<dbReference type="Pfam" id="PF00687">
    <property type="entry name" value="Ribosomal_L1"/>
    <property type="match status" value="1"/>
</dbReference>
<dbReference type="PIRSF" id="PIRSF002155">
    <property type="entry name" value="Ribosomal_L1"/>
    <property type="match status" value="1"/>
</dbReference>
<dbReference type="SUPFAM" id="SSF56808">
    <property type="entry name" value="Ribosomal protein L1"/>
    <property type="match status" value="1"/>
</dbReference>
<dbReference type="PROSITE" id="PS01199">
    <property type="entry name" value="RIBOSOMAL_L1"/>
    <property type="match status" value="1"/>
</dbReference>